<sequence>MQLPRVTLRQMTWTTSAIVLLGITLLLWSAFRHQESTLAIRAINQGTTMPDGFSVWHHLDANGIRFKSITPKNDTLLITFDSSAQSAAAKVVLDRTFPHGYIIAQQDEDNQASQWLSLLRDTSHRFG</sequence>
<comment type="function">
    <text evidence="1">Modulates the activity of the EnvZ/OmpR two-component regulatory system, probably by directly modulating EnvZ enzymatic activity and increasing stability of phosphorylated OmpR.</text>
</comment>
<comment type="subunit">
    <text evidence="1">Interacts with EnvZ.</text>
</comment>
<comment type="subcellular location">
    <subcellularLocation>
        <location evidence="1">Cell inner membrane</location>
        <topology evidence="1">Single-pass membrane protein</topology>
    </subcellularLocation>
</comment>
<comment type="similarity">
    <text evidence="1">Belongs to the MzrA family.</text>
</comment>
<keyword id="KW-0997">Cell inner membrane</keyword>
<keyword id="KW-1003">Cell membrane</keyword>
<keyword id="KW-0472">Membrane</keyword>
<keyword id="KW-0812">Transmembrane</keyword>
<keyword id="KW-1133">Transmembrane helix</keyword>
<protein>
    <recommendedName>
        <fullName evidence="1">Modulator protein MzrA</fullName>
    </recommendedName>
</protein>
<accession>B7LMW8</accession>
<proteinExistence type="inferred from homology"/>
<name>MZRA_ESCF3</name>
<reference key="1">
    <citation type="journal article" date="2009" name="PLoS Genet.">
        <title>Organised genome dynamics in the Escherichia coli species results in highly diverse adaptive paths.</title>
        <authorList>
            <person name="Touchon M."/>
            <person name="Hoede C."/>
            <person name="Tenaillon O."/>
            <person name="Barbe V."/>
            <person name="Baeriswyl S."/>
            <person name="Bidet P."/>
            <person name="Bingen E."/>
            <person name="Bonacorsi S."/>
            <person name="Bouchier C."/>
            <person name="Bouvet O."/>
            <person name="Calteau A."/>
            <person name="Chiapello H."/>
            <person name="Clermont O."/>
            <person name="Cruveiller S."/>
            <person name="Danchin A."/>
            <person name="Diard M."/>
            <person name="Dossat C."/>
            <person name="Karoui M.E."/>
            <person name="Frapy E."/>
            <person name="Garry L."/>
            <person name="Ghigo J.M."/>
            <person name="Gilles A.M."/>
            <person name="Johnson J."/>
            <person name="Le Bouguenec C."/>
            <person name="Lescat M."/>
            <person name="Mangenot S."/>
            <person name="Martinez-Jehanne V."/>
            <person name="Matic I."/>
            <person name="Nassif X."/>
            <person name="Oztas S."/>
            <person name="Petit M.A."/>
            <person name="Pichon C."/>
            <person name="Rouy Z."/>
            <person name="Ruf C.S."/>
            <person name="Schneider D."/>
            <person name="Tourret J."/>
            <person name="Vacherie B."/>
            <person name="Vallenet D."/>
            <person name="Medigue C."/>
            <person name="Rocha E.P.C."/>
            <person name="Denamur E."/>
        </authorList>
    </citation>
    <scope>NUCLEOTIDE SEQUENCE [LARGE SCALE GENOMIC DNA]</scope>
    <source>
        <strain>ATCC 35469 / DSM 13698 / BCRC 15582 / CCUG 18766 / IAM 14443 / JCM 21226 / LMG 7866 / NBRC 102419 / NCTC 12128 / CDC 0568-73</strain>
    </source>
</reference>
<dbReference type="EMBL" id="CU928158">
    <property type="protein sequence ID" value="CAQ91796.1"/>
    <property type="molecule type" value="Genomic_DNA"/>
</dbReference>
<dbReference type="RefSeq" id="WP_001176809.1">
    <property type="nucleotide sequence ID" value="NC_011740.1"/>
</dbReference>
<dbReference type="SMR" id="B7LMW8"/>
<dbReference type="GeneID" id="75059036"/>
<dbReference type="KEGG" id="efe:EFER_4378"/>
<dbReference type="HOGENOM" id="CLU_153761_0_0_6"/>
<dbReference type="OrthoDB" id="6414235at2"/>
<dbReference type="Proteomes" id="UP000000745">
    <property type="component" value="Chromosome"/>
</dbReference>
<dbReference type="GO" id="GO:0005886">
    <property type="term" value="C:plasma membrane"/>
    <property type="evidence" value="ECO:0007669"/>
    <property type="project" value="UniProtKB-SubCell"/>
</dbReference>
<dbReference type="GO" id="GO:0019901">
    <property type="term" value="F:protein kinase binding"/>
    <property type="evidence" value="ECO:0007669"/>
    <property type="project" value="UniProtKB-UniRule"/>
</dbReference>
<dbReference type="Gene3D" id="3.30.70.260">
    <property type="match status" value="1"/>
</dbReference>
<dbReference type="HAMAP" id="MF_00904">
    <property type="entry name" value="Modulator_MzrA"/>
    <property type="match status" value="1"/>
</dbReference>
<dbReference type="InterPro" id="IPR026574">
    <property type="entry name" value="Modulator_MzrA"/>
</dbReference>
<dbReference type="InterPro" id="IPR027398">
    <property type="entry name" value="SecD-TM"/>
</dbReference>
<dbReference type="NCBIfam" id="NF007915">
    <property type="entry name" value="PRK10629.1"/>
    <property type="match status" value="1"/>
</dbReference>
<dbReference type="Pfam" id="PF13721">
    <property type="entry name" value="SecD-TM1"/>
    <property type="match status" value="1"/>
</dbReference>
<feature type="chain" id="PRO_0000413188" description="Modulator protein MzrA">
    <location>
        <begin position="1"/>
        <end position="127"/>
    </location>
</feature>
<feature type="topological domain" description="Cytoplasmic" evidence="1">
    <location>
        <begin position="1"/>
        <end position="9"/>
    </location>
</feature>
<feature type="transmembrane region" description="Helical" evidence="1">
    <location>
        <begin position="10"/>
        <end position="32"/>
    </location>
</feature>
<feature type="topological domain" description="Periplasmic" evidence="1">
    <location>
        <begin position="33"/>
        <end position="127"/>
    </location>
</feature>
<gene>
    <name evidence="1" type="primary">mzrA</name>
    <name type="ordered locus">EFER_4378</name>
</gene>
<organism>
    <name type="scientific">Escherichia fergusonii (strain ATCC 35469 / DSM 13698 / CCUG 18766 / IAM 14443 / JCM 21226 / LMG 7866 / NBRC 102419 / NCTC 12128 / CDC 0568-73)</name>
    <dbReference type="NCBI Taxonomy" id="585054"/>
    <lineage>
        <taxon>Bacteria</taxon>
        <taxon>Pseudomonadati</taxon>
        <taxon>Pseudomonadota</taxon>
        <taxon>Gammaproteobacteria</taxon>
        <taxon>Enterobacterales</taxon>
        <taxon>Enterobacteriaceae</taxon>
        <taxon>Escherichia</taxon>
    </lineage>
</organism>
<evidence type="ECO:0000255" key="1">
    <source>
        <dbReference type="HAMAP-Rule" id="MF_00904"/>
    </source>
</evidence>